<feature type="chain" id="PRO_0000372383" description="Uncharacterized protein C191.05c">
    <location>
        <begin position="1"/>
        <end position="211"/>
    </location>
</feature>
<reference key="1">
    <citation type="journal article" date="2002" name="Nature">
        <title>The genome sequence of Schizosaccharomyces pombe.</title>
        <authorList>
            <person name="Wood V."/>
            <person name="Gwilliam R."/>
            <person name="Rajandream M.A."/>
            <person name="Lyne M.H."/>
            <person name="Lyne R."/>
            <person name="Stewart A."/>
            <person name="Sgouros J.G."/>
            <person name="Peat N."/>
            <person name="Hayles J."/>
            <person name="Baker S.G."/>
            <person name="Basham D."/>
            <person name="Bowman S."/>
            <person name="Brooks K."/>
            <person name="Brown D."/>
            <person name="Brown S."/>
            <person name="Chillingworth T."/>
            <person name="Churcher C.M."/>
            <person name="Collins M."/>
            <person name="Connor R."/>
            <person name="Cronin A."/>
            <person name="Davis P."/>
            <person name="Feltwell T."/>
            <person name="Fraser A."/>
            <person name="Gentles S."/>
            <person name="Goble A."/>
            <person name="Hamlin N."/>
            <person name="Harris D.E."/>
            <person name="Hidalgo J."/>
            <person name="Hodgson G."/>
            <person name="Holroyd S."/>
            <person name="Hornsby T."/>
            <person name="Howarth S."/>
            <person name="Huckle E.J."/>
            <person name="Hunt S."/>
            <person name="Jagels K."/>
            <person name="James K.D."/>
            <person name="Jones L."/>
            <person name="Jones M."/>
            <person name="Leather S."/>
            <person name="McDonald S."/>
            <person name="McLean J."/>
            <person name="Mooney P."/>
            <person name="Moule S."/>
            <person name="Mungall K.L."/>
            <person name="Murphy L.D."/>
            <person name="Niblett D."/>
            <person name="Odell C."/>
            <person name="Oliver K."/>
            <person name="O'Neil S."/>
            <person name="Pearson D."/>
            <person name="Quail M.A."/>
            <person name="Rabbinowitsch E."/>
            <person name="Rutherford K.M."/>
            <person name="Rutter S."/>
            <person name="Saunders D."/>
            <person name="Seeger K."/>
            <person name="Sharp S."/>
            <person name="Skelton J."/>
            <person name="Simmonds M.N."/>
            <person name="Squares R."/>
            <person name="Squares S."/>
            <person name="Stevens K."/>
            <person name="Taylor K."/>
            <person name="Taylor R.G."/>
            <person name="Tivey A."/>
            <person name="Walsh S.V."/>
            <person name="Warren T."/>
            <person name="Whitehead S."/>
            <person name="Woodward J.R."/>
            <person name="Volckaert G."/>
            <person name="Aert R."/>
            <person name="Robben J."/>
            <person name="Grymonprez B."/>
            <person name="Weltjens I."/>
            <person name="Vanstreels E."/>
            <person name="Rieger M."/>
            <person name="Schaefer M."/>
            <person name="Mueller-Auer S."/>
            <person name="Gabel C."/>
            <person name="Fuchs M."/>
            <person name="Duesterhoeft A."/>
            <person name="Fritzc C."/>
            <person name="Holzer E."/>
            <person name="Moestl D."/>
            <person name="Hilbert H."/>
            <person name="Borzym K."/>
            <person name="Langer I."/>
            <person name="Beck A."/>
            <person name="Lehrach H."/>
            <person name="Reinhardt R."/>
            <person name="Pohl T.M."/>
            <person name="Eger P."/>
            <person name="Zimmermann W."/>
            <person name="Wedler H."/>
            <person name="Wambutt R."/>
            <person name="Purnelle B."/>
            <person name="Goffeau A."/>
            <person name="Cadieu E."/>
            <person name="Dreano S."/>
            <person name="Gloux S."/>
            <person name="Lelaure V."/>
            <person name="Mottier S."/>
            <person name="Galibert F."/>
            <person name="Aves S.J."/>
            <person name="Xiang Z."/>
            <person name="Hunt C."/>
            <person name="Moore K."/>
            <person name="Hurst S.M."/>
            <person name="Lucas M."/>
            <person name="Rochet M."/>
            <person name="Gaillardin C."/>
            <person name="Tallada V.A."/>
            <person name="Garzon A."/>
            <person name="Thode G."/>
            <person name="Daga R.R."/>
            <person name="Cruzado L."/>
            <person name="Jimenez J."/>
            <person name="Sanchez M."/>
            <person name="del Rey F."/>
            <person name="Benito J."/>
            <person name="Dominguez A."/>
            <person name="Revuelta J.L."/>
            <person name="Moreno S."/>
            <person name="Armstrong J."/>
            <person name="Forsburg S.L."/>
            <person name="Cerutti L."/>
            <person name="Lowe T."/>
            <person name="McCombie W.R."/>
            <person name="Paulsen I."/>
            <person name="Potashkin J."/>
            <person name="Shpakovski G.V."/>
            <person name="Ussery D."/>
            <person name="Barrell B.G."/>
            <person name="Nurse P."/>
        </authorList>
    </citation>
    <scope>NUCLEOTIDE SEQUENCE [LARGE SCALE GENOMIC DNA]</scope>
    <source>
        <strain>972 / ATCC 24843</strain>
    </source>
</reference>
<reference key="2">
    <citation type="journal article" date="2006" name="Nat. Biotechnol.">
        <title>ORFeome cloning and global analysis of protein localization in the fission yeast Schizosaccharomyces pombe.</title>
        <authorList>
            <person name="Matsuyama A."/>
            <person name="Arai R."/>
            <person name="Yashiroda Y."/>
            <person name="Shirai A."/>
            <person name="Kamata A."/>
            <person name="Sekido S."/>
            <person name="Kobayashi Y."/>
            <person name="Hashimoto A."/>
            <person name="Hamamoto M."/>
            <person name="Hiraoka Y."/>
            <person name="Horinouchi S."/>
            <person name="Yoshida M."/>
        </authorList>
    </citation>
    <scope>SUBCELLULAR LOCATION [LARGE SCALE ANALYSIS]</scope>
</reference>
<comment type="subcellular location">
    <subcellularLocation>
        <location evidence="1">Cytoplasm</location>
    </subcellularLocation>
    <subcellularLocation>
        <location evidence="1">Nucleus</location>
    </subcellularLocation>
</comment>
<comment type="similarity">
    <text evidence="2">Belongs to the nucleoside deoxyribosyltransferase family.</text>
</comment>
<proteinExistence type="inferred from homology"/>
<sequence length="211" mass="22924">MTGTAKVSIPKAQPHKVPCVYLAGDLVFRPNAIELFDELKEICKDAGVQGVAPFDGQEGVEEMAPGAETSLKIAELDRKLMDRCDGGIFCLDPFRRAPDMDPGTAVELGYMAAQGKPLAGFTTDGRMYPEKVRSYRKQAWGDALKPRFTKGGSGSMEDADGLIVHSEGFLQNVMTEGFIRMSGGFVAVDFSIQEAFRTAIKDLAARLNSQH</sequence>
<dbReference type="EMBL" id="CU329672">
    <property type="protein sequence ID" value="CAB41051.1"/>
    <property type="molecule type" value="Genomic_DNA"/>
</dbReference>
<dbReference type="PIR" id="T41218">
    <property type="entry name" value="T41218"/>
</dbReference>
<dbReference type="RefSeq" id="NP_588294.1">
    <property type="nucleotide sequence ID" value="NM_001023284.2"/>
</dbReference>
<dbReference type="SMR" id="Q9Y7P9"/>
<dbReference type="BioGRID" id="275509">
    <property type="interactions" value="1"/>
</dbReference>
<dbReference type="FunCoup" id="Q9Y7P9">
    <property type="interactions" value="270"/>
</dbReference>
<dbReference type="STRING" id="284812.Q9Y7P9"/>
<dbReference type="PaxDb" id="4896-SPCC191.05c.1"/>
<dbReference type="EnsemblFungi" id="SPCC191.05c.1">
    <property type="protein sequence ID" value="SPCC191.05c.1:pep"/>
    <property type="gene ID" value="SPCC191.05c"/>
</dbReference>
<dbReference type="KEGG" id="spo:2538933"/>
<dbReference type="PomBase" id="SPCC191.05c"/>
<dbReference type="VEuPathDB" id="FungiDB:SPCC191.05c"/>
<dbReference type="eggNOG" id="ENOG502RZW5">
    <property type="taxonomic scope" value="Eukaryota"/>
</dbReference>
<dbReference type="HOGENOM" id="CLU_104078_1_0_1"/>
<dbReference type="InParanoid" id="Q9Y7P9"/>
<dbReference type="OMA" id="ANITPFR"/>
<dbReference type="PhylomeDB" id="Q9Y7P9"/>
<dbReference type="PRO" id="PR:Q9Y7P9"/>
<dbReference type="Proteomes" id="UP000002485">
    <property type="component" value="Chromosome III"/>
</dbReference>
<dbReference type="GO" id="GO:0005829">
    <property type="term" value="C:cytosol"/>
    <property type="evidence" value="ECO:0007005"/>
    <property type="project" value="PomBase"/>
</dbReference>
<dbReference type="GO" id="GO:0005634">
    <property type="term" value="C:nucleus"/>
    <property type="evidence" value="ECO:0007005"/>
    <property type="project" value="PomBase"/>
</dbReference>
<dbReference type="GO" id="GO:0070694">
    <property type="term" value="F:5-hydroxymethyl-dUMP N-hydrolase activity"/>
    <property type="evidence" value="ECO:0000318"/>
    <property type="project" value="GO_Central"/>
</dbReference>
<dbReference type="GO" id="GO:0050144">
    <property type="term" value="F:nucleoside deoxyribosyltransferase activity"/>
    <property type="evidence" value="ECO:0000255"/>
    <property type="project" value="PomBase"/>
</dbReference>
<dbReference type="GO" id="GO:0009159">
    <property type="term" value="P:deoxyribonucleoside monophosphate catabolic process"/>
    <property type="evidence" value="ECO:0000318"/>
    <property type="project" value="GO_Central"/>
</dbReference>
<dbReference type="Gene3D" id="3.40.50.450">
    <property type="match status" value="1"/>
</dbReference>
<dbReference type="InterPro" id="IPR051239">
    <property type="entry name" value="2'-dNMP_N-hydrolase"/>
</dbReference>
<dbReference type="InterPro" id="IPR007710">
    <property type="entry name" value="Nucleoside_deoxyribTrfase"/>
</dbReference>
<dbReference type="PANTHER" id="PTHR15364">
    <property type="entry name" value="2'-DEOXYNUCLEOSIDE 5'-PHOSPHATE N-HYDROLASE 1"/>
    <property type="match status" value="1"/>
</dbReference>
<dbReference type="PANTHER" id="PTHR15364:SF0">
    <property type="entry name" value="2'-DEOXYNUCLEOSIDE 5'-PHOSPHATE N-HYDROLASE 1"/>
    <property type="match status" value="1"/>
</dbReference>
<dbReference type="Pfam" id="PF05014">
    <property type="entry name" value="Nuc_deoxyrib_tr"/>
    <property type="match status" value="1"/>
</dbReference>
<dbReference type="SUPFAM" id="SSF52309">
    <property type="entry name" value="N-(deoxy)ribosyltransferase-like"/>
    <property type="match status" value="1"/>
</dbReference>
<evidence type="ECO:0000269" key="1">
    <source>
    </source>
</evidence>
<evidence type="ECO:0000305" key="2"/>
<gene>
    <name type="ORF">SPCC191.05c</name>
</gene>
<keyword id="KW-0963">Cytoplasm</keyword>
<keyword id="KW-0539">Nucleus</keyword>
<keyword id="KW-1185">Reference proteome</keyword>
<name>YQ65_SCHPO</name>
<protein>
    <recommendedName>
        <fullName>Uncharacterized protein C191.05c</fullName>
    </recommendedName>
</protein>
<accession>Q9Y7P9</accession>
<organism>
    <name type="scientific">Schizosaccharomyces pombe (strain 972 / ATCC 24843)</name>
    <name type="common">Fission yeast</name>
    <dbReference type="NCBI Taxonomy" id="284812"/>
    <lineage>
        <taxon>Eukaryota</taxon>
        <taxon>Fungi</taxon>
        <taxon>Dikarya</taxon>
        <taxon>Ascomycota</taxon>
        <taxon>Taphrinomycotina</taxon>
        <taxon>Schizosaccharomycetes</taxon>
        <taxon>Schizosaccharomycetales</taxon>
        <taxon>Schizosaccharomycetaceae</taxon>
        <taxon>Schizosaccharomyces</taxon>
    </lineage>
</organism>